<organism>
    <name type="scientific">Pseudomonas putida (strain W619)</name>
    <dbReference type="NCBI Taxonomy" id="390235"/>
    <lineage>
        <taxon>Bacteria</taxon>
        <taxon>Pseudomonadati</taxon>
        <taxon>Pseudomonadota</taxon>
        <taxon>Gammaproteobacteria</taxon>
        <taxon>Pseudomonadales</taxon>
        <taxon>Pseudomonadaceae</taxon>
        <taxon>Pseudomonas</taxon>
    </lineage>
</organism>
<name>RPOZ_PSEPW</name>
<protein>
    <recommendedName>
        <fullName evidence="1">DNA-directed RNA polymerase subunit omega</fullName>
        <shortName evidence="1">RNAP omega subunit</shortName>
        <ecNumber evidence="1">2.7.7.6</ecNumber>
    </recommendedName>
    <alternativeName>
        <fullName evidence="1">RNA polymerase omega subunit</fullName>
    </alternativeName>
    <alternativeName>
        <fullName evidence="1">Transcriptase subunit omega</fullName>
    </alternativeName>
</protein>
<sequence>MARVTVEDCLEHVDNRFELVMLSTKRARQLATGGKEPRVAWENDKPTVVALREIAEGIVTNEFIAAEEIVTEDPVFAAFEDESNEAV</sequence>
<gene>
    <name evidence="1" type="primary">rpoZ</name>
    <name type="ordered locus">PputW619_0172</name>
</gene>
<dbReference type="EC" id="2.7.7.6" evidence="1"/>
<dbReference type="EMBL" id="CP000949">
    <property type="protein sequence ID" value="ACA70678.1"/>
    <property type="molecule type" value="Genomic_DNA"/>
</dbReference>
<dbReference type="SMR" id="B1J4N3"/>
<dbReference type="STRING" id="390235.PputW619_0172"/>
<dbReference type="KEGG" id="ppw:PputW619_0172"/>
<dbReference type="eggNOG" id="COG1758">
    <property type="taxonomic scope" value="Bacteria"/>
</dbReference>
<dbReference type="HOGENOM" id="CLU_125406_5_2_6"/>
<dbReference type="OrthoDB" id="9796300at2"/>
<dbReference type="GO" id="GO:0000428">
    <property type="term" value="C:DNA-directed RNA polymerase complex"/>
    <property type="evidence" value="ECO:0007669"/>
    <property type="project" value="UniProtKB-KW"/>
</dbReference>
<dbReference type="GO" id="GO:0003677">
    <property type="term" value="F:DNA binding"/>
    <property type="evidence" value="ECO:0007669"/>
    <property type="project" value="UniProtKB-UniRule"/>
</dbReference>
<dbReference type="GO" id="GO:0003899">
    <property type="term" value="F:DNA-directed RNA polymerase activity"/>
    <property type="evidence" value="ECO:0007669"/>
    <property type="project" value="UniProtKB-UniRule"/>
</dbReference>
<dbReference type="GO" id="GO:0006351">
    <property type="term" value="P:DNA-templated transcription"/>
    <property type="evidence" value="ECO:0007669"/>
    <property type="project" value="UniProtKB-UniRule"/>
</dbReference>
<dbReference type="Gene3D" id="3.90.940.10">
    <property type="match status" value="1"/>
</dbReference>
<dbReference type="HAMAP" id="MF_00366">
    <property type="entry name" value="RNApol_bact_RpoZ"/>
    <property type="match status" value="1"/>
</dbReference>
<dbReference type="InterPro" id="IPR003716">
    <property type="entry name" value="DNA-dir_RNA_pol_omega"/>
</dbReference>
<dbReference type="InterPro" id="IPR006110">
    <property type="entry name" value="Pol_omega/Rpo6/RPB6"/>
</dbReference>
<dbReference type="InterPro" id="IPR036161">
    <property type="entry name" value="RPB6/omega-like_sf"/>
</dbReference>
<dbReference type="NCBIfam" id="TIGR00690">
    <property type="entry name" value="rpoZ"/>
    <property type="match status" value="1"/>
</dbReference>
<dbReference type="PANTHER" id="PTHR34476">
    <property type="entry name" value="DNA-DIRECTED RNA POLYMERASE SUBUNIT OMEGA"/>
    <property type="match status" value="1"/>
</dbReference>
<dbReference type="PANTHER" id="PTHR34476:SF1">
    <property type="entry name" value="DNA-DIRECTED RNA POLYMERASE SUBUNIT OMEGA"/>
    <property type="match status" value="1"/>
</dbReference>
<dbReference type="Pfam" id="PF01192">
    <property type="entry name" value="RNA_pol_Rpb6"/>
    <property type="match status" value="1"/>
</dbReference>
<dbReference type="SMART" id="SM01409">
    <property type="entry name" value="RNA_pol_Rpb6"/>
    <property type="match status" value="1"/>
</dbReference>
<dbReference type="SUPFAM" id="SSF63562">
    <property type="entry name" value="RPB6/omega subunit-like"/>
    <property type="match status" value="1"/>
</dbReference>
<proteinExistence type="inferred from homology"/>
<keyword id="KW-0240">DNA-directed RNA polymerase</keyword>
<keyword id="KW-0548">Nucleotidyltransferase</keyword>
<keyword id="KW-0804">Transcription</keyword>
<keyword id="KW-0808">Transferase</keyword>
<reference key="1">
    <citation type="submission" date="2008-02" db="EMBL/GenBank/DDBJ databases">
        <title>Complete sequence of Pseudomonas putida W619.</title>
        <authorList>
            <person name="Copeland A."/>
            <person name="Lucas S."/>
            <person name="Lapidus A."/>
            <person name="Barry K."/>
            <person name="Detter J.C."/>
            <person name="Glavina del Rio T."/>
            <person name="Dalin E."/>
            <person name="Tice H."/>
            <person name="Pitluck S."/>
            <person name="Chain P."/>
            <person name="Malfatti S."/>
            <person name="Shin M."/>
            <person name="Vergez L."/>
            <person name="Schmutz J."/>
            <person name="Larimer F."/>
            <person name="Land M."/>
            <person name="Hauser L."/>
            <person name="Kyrpides N."/>
            <person name="Kim E."/>
            <person name="Taghavi S."/>
            <person name="Vangronsveld D."/>
            <person name="van der Lelie D."/>
            <person name="Richardson P."/>
        </authorList>
    </citation>
    <scope>NUCLEOTIDE SEQUENCE [LARGE SCALE GENOMIC DNA]</scope>
    <source>
        <strain>W619</strain>
    </source>
</reference>
<accession>B1J4N3</accession>
<evidence type="ECO:0000255" key="1">
    <source>
        <dbReference type="HAMAP-Rule" id="MF_00366"/>
    </source>
</evidence>
<comment type="function">
    <text evidence="1">Promotes RNA polymerase assembly. Latches the N- and C-terminal regions of the beta' subunit thereby facilitating its interaction with the beta and alpha subunits.</text>
</comment>
<comment type="catalytic activity">
    <reaction evidence="1">
        <text>RNA(n) + a ribonucleoside 5'-triphosphate = RNA(n+1) + diphosphate</text>
        <dbReference type="Rhea" id="RHEA:21248"/>
        <dbReference type="Rhea" id="RHEA-COMP:14527"/>
        <dbReference type="Rhea" id="RHEA-COMP:17342"/>
        <dbReference type="ChEBI" id="CHEBI:33019"/>
        <dbReference type="ChEBI" id="CHEBI:61557"/>
        <dbReference type="ChEBI" id="CHEBI:140395"/>
        <dbReference type="EC" id="2.7.7.6"/>
    </reaction>
</comment>
<comment type="subunit">
    <text evidence="1">The RNAP catalytic core consists of 2 alpha, 1 beta, 1 beta' and 1 omega subunit. When a sigma factor is associated with the core the holoenzyme is formed, which can initiate transcription.</text>
</comment>
<comment type="similarity">
    <text evidence="1">Belongs to the RNA polymerase subunit omega family.</text>
</comment>
<feature type="chain" id="PRO_1000121258" description="DNA-directed RNA polymerase subunit omega">
    <location>
        <begin position="1"/>
        <end position="87"/>
    </location>
</feature>